<keyword id="KW-0067">ATP-binding</keyword>
<keyword id="KW-0143">Chaperone</keyword>
<keyword id="KW-0547">Nucleotide-binding</keyword>
<keyword id="KW-0677">Repeat</keyword>
<keyword id="KW-0346">Stress response</keyword>
<sequence length="818" mass="91037">MLFGRLTERAQRVLAHAQEEAIRLNHSNIGTEHLLLGLMKEPEGIAAKVLESFNITEDKVIEEVEKLIGHGQDHVGTLHYTPRAKKVIELSMDEARKLHHNFVGTEHILLGLIRENEGVAARVFANLDLNITKARAQVVKALGNPEMSNKNAQASKSNNTPTLDSLARDLTVIAKDGTLDPVIGRDKEITRVIEVLSRRTKNNPVLIGEPGVGKTAIAEGLAQAIVNNEVPETLKDKRVMSLDMGTVVAGTKYRGEFEERLKKVMEEIQQAGNVILFIDELHTLVGAGGAEGAIDASNILKPALARGELQCIGATTLDEYRKNIEKDAALERRFQPVQVDEPSVVDTVAILKGLRDRYEAHHRINISDEAIEAAVKLSNRYVSDRFLPDKAIDLIDEASSKVRLKSHTTPNNLKEIEQEIEKVKNEKDAAVHAQEFENAANLRDKQTKLEKQYEEAKNEWKNAQNGMSTSLSEEDIAEVIAGWTGIPLTKINETESEKLLSLEDTLHERVIGQKDAVNSISKAVRRARAGLKDPKRPIGSFIFLGPTGVGKTELARALAESMFGDDDAMIRVDMSEFMEKHAVSRLVGAPPGYVGHDDGGQLTEKVRRKPYSVILFDEIEKAHPDVFNILLQVLDDGHLTDTKGRTVDFRNTIIIMTSNVGAQELQDQRFAGFGGSSDGQDYETIRKTMLKELKNSFRPEFLNRVDDIIVFHKLTKEELKEIVTMMVNKLTNRLSEQNINIIVTDKAKDKIAEEGYDPEYGARPLIRAIQKTIEDNLSELILDGNQIEGKKVTVDHDGKEFKYDIAEQTSETKTPSQA</sequence>
<evidence type="ECO:0000250" key="1"/>
<evidence type="ECO:0000255" key="2"/>
<evidence type="ECO:0000255" key="3">
    <source>
        <dbReference type="PROSITE-ProRule" id="PRU00217"/>
    </source>
</evidence>
<evidence type="ECO:0000255" key="4">
    <source>
        <dbReference type="PROSITE-ProRule" id="PRU01251"/>
    </source>
</evidence>
<evidence type="ECO:0000305" key="5"/>
<name>CLPC_STAAS</name>
<reference key="1">
    <citation type="journal article" date="2004" name="Proc. Natl. Acad. Sci. U.S.A.">
        <title>Complete genomes of two clinical Staphylococcus aureus strains: evidence for the rapid evolution of virulence and drug resistance.</title>
        <authorList>
            <person name="Holden M.T.G."/>
            <person name="Feil E.J."/>
            <person name="Lindsay J.A."/>
            <person name="Peacock S.J."/>
            <person name="Day N.P.J."/>
            <person name="Enright M.C."/>
            <person name="Foster T.J."/>
            <person name="Moore C.E."/>
            <person name="Hurst L."/>
            <person name="Atkin R."/>
            <person name="Barron A."/>
            <person name="Bason N."/>
            <person name="Bentley S.D."/>
            <person name="Chillingworth C."/>
            <person name="Chillingworth T."/>
            <person name="Churcher C."/>
            <person name="Clark L."/>
            <person name="Corton C."/>
            <person name="Cronin A."/>
            <person name="Doggett J."/>
            <person name="Dowd L."/>
            <person name="Feltwell T."/>
            <person name="Hance Z."/>
            <person name="Harris B."/>
            <person name="Hauser H."/>
            <person name="Holroyd S."/>
            <person name="Jagels K."/>
            <person name="James K.D."/>
            <person name="Lennard N."/>
            <person name="Line A."/>
            <person name="Mayes R."/>
            <person name="Moule S."/>
            <person name="Mungall K."/>
            <person name="Ormond D."/>
            <person name="Quail M.A."/>
            <person name="Rabbinowitsch E."/>
            <person name="Rutherford K.M."/>
            <person name="Sanders M."/>
            <person name="Sharp S."/>
            <person name="Simmonds M."/>
            <person name="Stevens K."/>
            <person name="Whitehead S."/>
            <person name="Barrell B.G."/>
            <person name="Spratt B.G."/>
            <person name="Parkhill J."/>
        </authorList>
    </citation>
    <scope>NUCLEOTIDE SEQUENCE [LARGE SCALE GENOMIC DNA]</scope>
    <source>
        <strain>MSSA476</strain>
    </source>
</reference>
<comment type="function">
    <text evidence="1">Required for growth at high temperatures, probably by acting as a chaperone during heat shock and targeting heat-denatured proteins for degradation by ClpP.</text>
</comment>
<comment type="similarity">
    <text evidence="5">Belongs to the ClpA/ClpB family. ClpC subfamily.</text>
</comment>
<feature type="chain" id="PRO_0000269686" description="ATP-dependent Clp protease ATP-binding subunit ClpC">
    <location>
        <begin position="1"/>
        <end position="818"/>
    </location>
</feature>
<feature type="domain" description="Clp R" evidence="4">
    <location>
        <begin position="3"/>
        <end position="144"/>
    </location>
</feature>
<feature type="domain" description="UVR" evidence="3">
    <location>
        <begin position="417"/>
        <end position="452"/>
    </location>
</feature>
<feature type="region of interest" description="Repeat 1" evidence="4">
    <location>
        <begin position="6"/>
        <end position="71"/>
    </location>
</feature>
<feature type="region of interest" description="Repeat 2" evidence="4">
    <location>
        <begin position="80"/>
        <end position="144"/>
    </location>
</feature>
<feature type="region of interest" description="I">
    <location>
        <begin position="163"/>
        <end position="410"/>
    </location>
</feature>
<feature type="region of interest" description="II">
    <location>
        <begin position="471"/>
        <end position="662"/>
    </location>
</feature>
<feature type="binding site" evidence="2">
    <location>
        <begin position="208"/>
        <end position="215"/>
    </location>
    <ligand>
        <name>ATP</name>
        <dbReference type="ChEBI" id="CHEBI:30616"/>
    </ligand>
</feature>
<feature type="binding site" evidence="2">
    <location>
        <begin position="545"/>
        <end position="552"/>
    </location>
    <ligand>
        <name>ATP</name>
        <dbReference type="ChEBI" id="CHEBI:30616"/>
    </ligand>
</feature>
<dbReference type="EMBL" id="BX571857">
    <property type="protein sequence ID" value="CAG42257.1"/>
    <property type="molecule type" value="Genomic_DNA"/>
</dbReference>
<dbReference type="RefSeq" id="WP_000897132.1">
    <property type="nucleotide sequence ID" value="NC_002953.3"/>
</dbReference>
<dbReference type="SMR" id="Q6GBW3"/>
<dbReference type="KEGG" id="sas:SAS0482"/>
<dbReference type="HOGENOM" id="CLU_005070_4_1_9"/>
<dbReference type="GO" id="GO:0005737">
    <property type="term" value="C:cytoplasm"/>
    <property type="evidence" value="ECO:0007669"/>
    <property type="project" value="TreeGrafter"/>
</dbReference>
<dbReference type="GO" id="GO:0005524">
    <property type="term" value="F:ATP binding"/>
    <property type="evidence" value="ECO:0007669"/>
    <property type="project" value="UniProtKB-KW"/>
</dbReference>
<dbReference type="GO" id="GO:0016887">
    <property type="term" value="F:ATP hydrolysis activity"/>
    <property type="evidence" value="ECO:0007669"/>
    <property type="project" value="InterPro"/>
</dbReference>
<dbReference type="GO" id="GO:0034605">
    <property type="term" value="P:cellular response to heat"/>
    <property type="evidence" value="ECO:0007669"/>
    <property type="project" value="TreeGrafter"/>
</dbReference>
<dbReference type="CDD" id="cd00009">
    <property type="entry name" value="AAA"/>
    <property type="match status" value="1"/>
</dbReference>
<dbReference type="CDD" id="cd19499">
    <property type="entry name" value="RecA-like_ClpB_Hsp104-like"/>
    <property type="match status" value="1"/>
</dbReference>
<dbReference type="FunFam" id="1.10.8.60:FF:000017">
    <property type="entry name" value="ATP-dependent chaperone ClpB"/>
    <property type="match status" value="1"/>
</dbReference>
<dbReference type="FunFam" id="1.10.8.60:FF:000011">
    <property type="entry name" value="ATP-dependent Clp protease ATP-binding subunit"/>
    <property type="match status" value="1"/>
</dbReference>
<dbReference type="FunFam" id="3.40.50.300:FF:000025">
    <property type="entry name" value="ATP-dependent Clp protease subunit"/>
    <property type="match status" value="1"/>
</dbReference>
<dbReference type="FunFam" id="3.40.50.300:FF:000010">
    <property type="entry name" value="Chaperone clpB 1, putative"/>
    <property type="match status" value="1"/>
</dbReference>
<dbReference type="Gene3D" id="1.10.8.60">
    <property type="match status" value="2"/>
</dbReference>
<dbReference type="Gene3D" id="1.10.1780.10">
    <property type="entry name" value="Clp, N-terminal domain"/>
    <property type="match status" value="1"/>
</dbReference>
<dbReference type="Gene3D" id="3.40.50.300">
    <property type="entry name" value="P-loop containing nucleotide triphosphate hydrolases"/>
    <property type="match status" value="2"/>
</dbReference>
<dbReference type="Gene3D" id="4.10.860.10">
    <property type="entry name" value="UVR domain"/>
    <property type="match status" value="1"/>
</dbReference>
<dbReference type="InterPro" id="IPR003593">
    <property type="entry name" value="AAA+_ATPase"/>
</dbReference>
<dbReference type="InterPro" id="IPR003959">
    <property type="entry name" value="ATPase_AAA_core"/>
</dbReference>
<dbReference type="InterPro" id="IPR019489">
    <property type="entry name" value="Clp_ATPase_C"/>
</dbReference>
<dbReference type="InterPro" id="IPR036628">
    <property type="entry name" value="Clp_N_dom_sf"/>
</dbReference>
<dbReference type="InterPro" id="IPR004176">
    <property type="entry name" value="Clp_R_dom"/>
</dbReference>
<dbReference type="InterPro" id="IPR001270">
    <property type="entry name" value="ClpA/B"/>
</dbReference>
<dbReference type="InterPro" id="IPR018368">
    <property type="entry name" value="ClpA/B_CS1"/>
</dbReference>
<dbReference type="InterPro" id="IPR028299">
    <property type="entry name" value="ClpA/B_CS2"/>
</dbReference>
<dbReference type="InterPro" id="IPR041546">
    <property type="entry name" value="ClpA/ClpB_AAA_lid"/>
</dbReference>
<dbReference type="InterPro" id="IPR050130">
    <property type="entry name" value="ClpA_ClpB"/>
</dbReference>
<dbReference type="InterPro" id="IPR027417">
    <property type="entry name" value="P-loop_NTPase"/>
</dbReference>
<dbReference type="InterPro" id="IPR001943">
    <property type="entry name" value="UVR_dom"/>
</dbReference>
<dbReference type="PANTHER" id="PTHR11638">
    <property type="entry name" value="ATP-DEPENDENT CLP PROTEASE"/>
    <property type="match status" value="1"/>
</dbReference>
<dbReference type="PANTHER" id="PTHR11638:SF18">
    <property type="entry name" value="HEAT SHOCK PROTEIN 104"/>
    <property type="match status" value="1"/>
</dbReference>
<dbReference type="Pfam" id="PF00004">
    <property type="entry name" value="AAA"/>
    <property type="match status" value="1"/>
</dbReference>
<dbReference type="Pfam" id="PF07724">
    <property type="entry name" value="AAA_2"/>
    <property type="match status" value="1"/>
</dbReference>
<dbReference type="Pfam" id="PF17871">
    <property type="entry name" value="AAA_lid_9"/>
    <property type="match status" value="1"/>
</dbReference>
<dbReference type="Pfam" id="PF02861">
    <property type="entry name" value="Clp_N"/>
    <property type="match status" value="2"/>
</dbReference>
<dbReference type="Pfam" id="PF10431">
    <property type="entry name" value="ClpB_D2-small"/>
    <property type="match status" value="1"/>
</dbReference>
<dbReference type="PRINTS" id="PR00300">
    <property type="entry name" value="CLPPROTEASEA"/>
</dbReference>
<dbReference type="SMART" id="SM00382">
    <property type="entry name" value="AAA"/>
    <property type="match status" value="2"/>
</dbReference>
<dbReference type="SMART" id="SM01086">
    <property type="entry name" value="ClpB_D2-small"/>
    <property type="match status" value="1"/>
</dbReference>
<dbReference type="SUPFAM" id="SSF81923">
    <property type="entry name" value="Double Clp-N motif"/>
    <property type="match status" value="1"/>
</dbReference>
<dbReference type="SUPFAM" id="SSF52540">
    <property type="entry name" value="P-loop containing nucleoside triphosphate hydrolases"/>
    <property type="match status" value="2"/>
</dbReference>
<dbReference type="PROSITE" id="PS51903">
    <property type="entry name" value="CLP_R"/>
    <property type="match status" value="1"/>
</dbReference>
<dbReference type="PROSITE" id="PS00870">
    <property type="entry name" value="CLPAB_1"/>
    <property type="match status" value="1"/>
</dbReference>
<dbReference type="PROSITE" id="PS00871">
    <property type="entry name" value="CLPAB_2"/>
    <property type="match status" value="1"/>
</dbReference>
<dbReference type="PROSITE" id="PS50151">
    <property type="entry name" value="UVR"/>
    <property type="match status" value="1"/>
</dbReference>
<organism>
    <name type="scientific">Staphylococcus aureus (strain MSSA476)</name>
    <dbReference type="NCBI Taxonomy" id="282459"/>
    <lineage>
        <taxon>Bacteria</taxon>
        <taxon>Bacillati</taxon>
        <taxon>Bacillota</taxon>
        <taxon>Bacilli</taxon>
        <taxon>Bacillales</taxon>
        <taxon>Staphylococcaceae</taxon>
        <taxon>Staphylococcus</taxon>
    </lineage>
</organism>
<protein>
    <recommendedName>
        <fullName>ATP-dependent Clp protease ATP-binding subunit ClpC</fullName>
    </recommendedName>
</protein>
<gene>
    <name type="primary">clpC</name>
    <name type="ordered locus">SAS0482</name>
</gene>
<proteinExistence type="inferred from homology"/>
<accession>Q6GBW3</accession>